<reference key="1">
    <citation type="journal article" date="2006" name="BMC Genomics">
        <title>Complete genome sequence of Shigella flexneri 5b and comparison with Shigella flexneri 2a.</title>
        <authorList>
            <person name="Nie H."/>
            <person name="Yang F."/>
            <person name="Zhang X."/>
            <person name="Yang J."/>
            <person name="Chen L."/>
            <person name="Wang J."/>
            <person name="Xiong Z."/>
            <person name="Peng J."/>
            <person name="Sun L."/>
            <person name="Dong J."/>
            <person name="Xue Y."/>
            <person name="Xu X."/>
            <person name="Chen S."/>
            <person name="Yao Z."/>
            <person name="Shen Y."/>
            <person name="Jin Q."/>
        </authorList>
    </citation>
    <scope>NUCLEOTIDE SEQUENCE [LARGE SCALE GENOMIC DNA]</scope>
    <source>
        <strain>8401</strain>
    </source>
</reference>
<proteinExistence type="inferred from homology"/>
<name>GCSH_SHIF8</name>
<comment type="function">
    <text evidence="1">The glycine cleavage system catalyzes the degradation of glycine. The H protein shuttles the methylamine group of glycine from the P protein to the T protein.</text>
</comment>
<comment type="cofactor">
    <cofactor evidence="1">
        <name>(R)-lipoate</name>
        <dbReference type="ChEBI" id="CHEBI:83088"/>
    </cofactor>
    <text evidence="1">Binds 1 lipoyl cofactor covalently.</text>
</comment>
<comment type="subunit">
    <text evidence="1">The glycine cleavage system is composed of four proteins: P, T, L and H.</text>
</comment>
<comment type="similarity">
    <text evidence="1">Belongs to the GcvH family.</text>
</comment>
<feature type="chain" id="PRO_0000302439" description="Glycine cleavage system H protein">
    <location>
        <begin position="1"/>
        <end position="129"/>
    </location>
</feature>
<feature type="domain" description="Lipoyl-binding" evidence="2">
    <location>
        <begin position="24"/>
        <end position="106"/>
    </location>
</feature>
<feature type="modified residue" description="N6-lipoyllysine" evidence="1">
    <location>
        <position position="65"/>
    </location>
</feature>
<protein>
    <recommendedName>
        <fullName evidence="1">Glycine cleavage system H protein</fullName>
    </recommendedName>
</protein>
<gene>
    <name evidence="1" type="primary">gcvH</name>
    <name type="ordered locus">SFV_2952</name>
</gene>
<accession>Q0T0Z4</accession>
<sequence length="129" mass="13811">MSNVPAELKYSKEHEWLRKEADGTYTVGITEHAQELLGDMVFVDLPEVGATVSAGDDCAVAESVKAASDIYAPVSGEIVAVNDALSDSPELVNSEPYAGGWIFKIKASDESELESLLDATAYEALLEDE</sequence>
<organism>
    <name type="scientific">Shigella flexneri serotype 5b (strain 8401)</name>
    <dbReference type="NCBI Taxonomy" id="373384"/>
    <lineage>
        <taxon>Bacteria</taxon>
        <taxon>Pseudomonadati</taxon>
        <taxon>Pseudomonadota</taxon>
        <taxon>Gammaproteobacteria</taxon>
        <taxon>Enterobacterales</taxon>
        <taxon>Enterobacteriaceae</taxon>
        <taxon>Shigella</taxon>
    </lineage>
</organism>
<keyword id="KW-0450">Lipoyl</keyword>
<evidence type="ECO:0000255" key="1">
    <source>
        <dbReference type="HAMAP-Rule" id="MF_00272"/>
    </source>
</evidence>
<evidence type="ECO:0000255" key="2">
    <source>
        <dbReference type="PROSITE-ProRule" id="PRU01066"/>
    </source>
</evidence>
<dbReference type="EMBL" id="CP000266">
    <property type="protein sequence ID" value="ABF05021.1"/>
    <property type="molecule type" value="Genomic_DNA"/>
</dbReference>
<dbReference type="RefSeq" id="WP_001295377.1">
    <property type="nucleotide sequence ID" value="NC_008258.1"/>
</dbReference>
<dbReference type="SMR" id="Q0T0Z4"/>
<dbReference type="GeneID" id="93779098"/>
<dbReference type="KEGG" id="sfv:SFV_2952"/>
<dbReference type="HOGENOM" id="CLU_097408_2_1_6"/>
<dbReference type="Proteomes" id="UP000000659">
    <property type="component" value="Chromosome"/>
</dbReference>
<dbReference type="GO" id="GO:0005829">
    <property type="term" value="C:cytosol"/>
    <property type="evidence" value="ECO:0007669"/>
    <property type="project" value="TreeGrafter"/>
</dbReference>
<dbReference type="GO" id="GO:0005960">
    <property type="term" value="C:glycine cleavage complex"/>
    <property type="evidence" value="ECO:0007669"/>
    <property type="project" value="InterPro"/>
</dbReference>
<dbReference type="GO" id="GO:0019464">
    <property type="term" value="P:glycine decarboxylation via glycine cleavage system"/>
    <property type="evidence" value="ECO:0007669"/>
    <property type="project" value="UniProtKB-UniRule"/>
</dbReference>
<dbReference type="CDD" id="cd06848">
    <property type="entry name" value="GCS_H"/>
    <property type="match status" value="1"/>
</dbReference>
<dbReference type="FunFam" id="2.40.50.100:FF:000011">
    <property type="entry name" value="Glycine cleavage system H protein"/>
    <property type="match status" value="1"/>
</dbReference>
<dbReference type="Gene3D" id="2.40.50.100">
    <property type="match status" value="1"/>
</dbReference>
<dbReference type="HAMAP" id="MF_00272">
    <property type="entry name" value="GcvH"/>
    <property type="match status" value="1"/>
</dbReference>
<dbReference type="InterPro" id="IPR003016">
    <property type="entry name" value="2-oxoA_DH_lipoyl-BS"/>
</dbReference>
<dbReference type="InterPro" id="IPR000089">
    <property type="entry name" value="Biotin_lipoyl"/>
</dbReference>
<dbReference type="InterPro" id="IPR002930">
    <property type="entry name" value="GCV_H"/>
</dbReference>
<dbReference type="InterPro" id="IPR033753">
    <property type="entry name" value="GCV_H/Fam206"/>
</dbReference>
<dbReference type="InterPro" id="IPR017453">
    <property type="entry name" value="GCV_H_sub"/>
</dbReference>
<dbReference type="InterPro" id="IPR011053">
    <property type="entry name" value="Single_hybrid_motif"/>
</dbReference>
<dbReference type="NCBIfam" id="TIGR00527">
    <property type="entry name" value="gcvH"/>
    <property type="match status" value="1"/>
</dbReference>
<dbReference type="NCBIfam" id="NF002270">
    <property type="entry name" value="PRK01202.1"/>
    <property type="match status" value="1"/>
</dbReference>
<dbReference type="PANTHER" id="PTHR11715">
    <property type="entry name" value="GLYCINE CLEAVAGE SYSTEM H PROTEIN"/>
    <property type="match status" value="1"/>
</dbReference>
<dbReference type="PANTHER" id="PTHR11715:SF3">
    <property type="entry name" value="GLYCINE CLEAVAGE SYSTEM H PROTEIN-RELATED"/>
    <property type="match status" value="1"/>
</dbReference>
<dbReference type="Pfam" id="PF01597">
    <property type="entry name" value="GCV_H"/>
    <property type="match status" value="1"/>
</dbReference>
<dbReference type="SUPFAM" id="SSF51230">
    <property type="entry name" value="Single hybrid motif"/>
    <property type="match status" value="1"/>
</dbReference>
<dbReference type="PROSITE" id="PS50968">
    <property type="entry name" value="BIOTINYL_LIPOYL"/>
    <property type="match status" value="1"/>
</dbReference>
<dbReference type="PROSITE" id="PS00189">
    <property type="entry name" value="LIPOYL"/>
    <property type="match status" value="1"/>
</dbReference>